<comment type="function">
    <text evidence="3">Catalyzes the first and rate-limiting step of polyamine biosynthesis that converts ornithine into putrescine, which is the precursor for the polyamines, spermidine and spermine. Polyamines are essential for cell proliferation and are implicated in cellular processes, ranging from DNA replication to apoptosis.</text>
</comment>
<comment type="catalytic activity">
    <reaction evidence="3">
        <text>L-ornithine + H(+) = putrescine + CO2</text>
        <dbReference type="Rhea" id="RHEA:22964"/>
        <dbReference type="ChEBI" id="CHEBI:15378"/>
        <dbReference type="ChEBI" id="CHEBI:16526"/>
        <dbReference type="ChEBI" id="CHEBI:46911"/>
        <dbReference type="ChEBI" id="CHEBI:326268"/>
        <dbReference type="EC" id="4.1.1.17"/>
    </reaction>
</comment>
<comment type="cofactor">
    <cofactor evidence="3">
        <name>pyridoxal 5'-phosphate</name>
        <dbReference type="ChEBI" id="CHEBI:597326"/>
    </cofactor>
</comment>
<comment type="activity regulation">
    <text evidence="3">Inhibited by antizyme (AZ) in response to polyamine levels. AZ inhibits the assembly of the functional homodimer by binding to ODC monomers and targeting them for ubiquitin-independent proteolytic destruction by the 26S proteasome.</text>
</comment>
<comment type="pathway">
    <text>Amine and polyamine biosynthesis; putrescine biosynthesis via L-ornithine pathway; putrescine from L-ornithine: step 1/1.</text>
</comment>
<comment type="subunit">
    <text evidence="3">Homodimer. Only the dimer is catalytically active, as the active sites are constructed of residues from both monomers.</text>
</comment>
<comment type="induction">
    <text evidence="4 5">By virus infection. Up-regulated during the later stages of ripening.</text>
</comment>
<comment type="similarity">
    <text evidence="6">Belongs to the Orn/Lys/Arg decarboxylase class-II family.</text>
</comment>
<feature type="chain" id="PRO_0000239254" description="Ornithine decarboxylase">
    <location>
        <begin position="1"/>
        <end position="435"/>
    </location>
</feature>
<feature type="active site" description="Proton donor; shared with dimeric partner" evidence="3">
    <location>
        <position position="380"/>
    </location>
</feature>
<feature type="binding site" evidence="3">
    <location>
        <position position="230"/>
    </location>
    <ligand>
        <name>pyridoxal 5'-phosphate</name>
        <dbReference type="ChEBI" id="CHEBI:597326"/>
    </ligand>
</feature>
<feature type="binding site" evidence="3">
    <location>
        <position position="268"/>
    </location>
    <ligand>
        <name>pyridoxal 5'-phosphate</name>
        <dbReference type="ChEBI" id="CHEBI:597326"/>
    </ligand>
</feature>
<feature type="binding site" evidence="3">
    <location>
        <begin position="301"/>
        <end position="304"/>
    </location>
    <ligand>
        <name>pyridoxal 5'-phosphate</name>
        <dbReference type="ChEBI" id="CHEBI:597326"/>
    </ligand>
</feature>
<feature type="binding site" description="in other chain" evidence="2">
    <location>
        <begin position="344"/>
        <end position="345"/>
    </location>
    <ligand>
        <name>substrate</name>
        <note>ligand shared between dimeric partners</note>
    </ligand>
</feature>
<feature type="binding site" evidence="2">
    <location>
        <position position="381"/>
    </location>
    <ligand>
        <name>substrate</name>
        <note>ligand shared between dimeric partners</note>
    </ligand>
</feature>
<feature type="binding site" evidence="3">
    <location>
        <position position="409"/>
    </location>
    <ligand>
        <name>pyridoxal 5'-phosphate</name>
        <dbReference type="ChEBI" id="CHEBI:597326"/>
    </ligand>
</feature>
<feature type="site" description="Stacks against the aromatic ring of pyridoxal phosphate and stabilizes reaction intermediates" evidence="1">
    <location>
        <position position="227"/>
    </location>
</feature>
<feature type="modified residue" description="N6-(pyridoxal phosphate)lysine" evidence="3">
    <location>
        <position position="98"/>
    </location>
</feature>
<feature type="sequence conflict" description="In Ref. 2; AAL83709." evidence="6" ref="2">
    <original>E</original>
    <variation>K</variation>
    <location>
        <position position="65"/>
    </location>
</feature>
<feature type="sequence conflict" description="In Ref. 2; AAL83709." evidence="6" ref="2">
    <original>R</original>
    <variation>H</variation>
    <location>
        <position position="92"/>
    </location>
</feature>
<feature type="sequence conflict" description="In Ref. 2; AAL83709." evidence="6" ref="2">
    <original>V</original>
    <variation>D</variation>
    <location>
        <position position="117"/>
    </location>
</feature>
<feature type="sequence conflict" description="In Ref. 2; AAL83709." evidence="6" ref="2">
    <original>HV</original>
    <variation>QL</variation>
    <location>
        <begin position="391"/>
        <end position="392"/>
    </location>
</feature>
<feature type="sequence conflict" description="In Ref. 2; AAL83709." evidence="6" ref="2">
    <original>V</original>
    <variation>L</variation>
    <location>
        <position position="401"/>
    </location>
</feature>
<reference key="1">
    <citation type="journal article" date="2002" name="J. Biochem. Mol. Biol. Biophys.">
        <title>Molecular cloning and sequence analysis of a cDNA encoding ornithine decarboxylase cDNA from chilli (Capsicum annuum).</title>
        <authorList>
            <person name="Zainal Z."/>
            <person name="Sajari R."/>
            <person name="Ismail I."/>
        </authorList>
    </citation>
    <scope>NUCLEOTIDE SEQUENCE [MRNA]</scope>
    <scope>INDUCTION</scope>
    <source>
        <strain>cv. MC11</strain>
        <tissue>Fruit</tissue>
    </source>
</reference>
<reference key="2">
    <citation type="submission" date="2002-02" db="EMBL/GenBank/DDBJ databases">
        <title>A hot pepper cDNA encoding ornithine decarboxylase is induced during the resistance response to tobacco mosaic virus.</title>
        <authorList>
            <person name="Yoo T.H."/>
            <person name="Park C.-J."/>
            <person name="Lee G.-J."/>
            <person name="Shin R."/>
            <person name="Kim K.-J."/>
            <person name="Yun J.-H."/>
            <person name="Paek K.-H."/>
        </authorList>
    </citation>
    <scope>NUCLEOTIDE SEQUENCE [MRNA]</scope>
    <scope>INDUCTION</scope>
</reference>
<dbReference type="EC" id="4.1.1.17"/>
<dbReference type="EMBL" id="AF480882">
    <property type="protein sequence ID" value="AAL87201.1"/>
    <property type="molecule type" value="mRNA"/>
</dbReference>
<dbReference type="EMBL" id="AY078081">
    <property type="protein sequence ID" value="AAL83709.1"/>
    <property type="molecule type" value="mRNA"/>
</dbReference>
<dbReference type="RefSeq" id="NP_001311857.1">
    <property type="nucleotide sequence ID" value="NM_001324928.1"/>
</dbReference>
<dbReference type="SMR" id="Q8S3N2"/>
<dbReference type="GeneID" id="107866830"/>
<dbReference type="KEGG" id="cann:107866830"/>
<dbReference type="OrthoDB" id="5034579at2759"/>
<dbReference type="BioCyc" id="MetaCyc:MONOMER-14989"/>
<dbReference type="UniPathway" id="UPA00535">
    <property type="reaction ID" value="UER00288"/>
</dbReference>
<dbReference type="GO" id="GO:0004586">
    <property type="term" value="F:ornithine decarboxylase activity"/>
    <property type="evidence" value="ECO:0007669"/>
    <property type="project" value="UniProtKB-EC"/>
</dbReference>
<dbReference type="GO" id="GO:0033387">
    <property type="term" value="P:putrescine biosynthetic process from arginine, via ornithine"/>
    <property type="evidence" value="ECO:0007669"/>
    <property type="project" value="UniProtKB-UniPathway"/>
</dbReference>
<dbReference type="CDD" id="cd00622">
    <property type="entry name" value="PLPDE_III_ODC"/>
    <property type="match status" value="1"/>
</dbReference>
<dbReference type="FunFam" id="3.20.20.10:FF:000005">
    <property type="entry name" value="Ornithine decarboxylase"/>
    <property type="match status" value="1"/>
</dbReference>
<dbReference type="Gene3D" id="3.20.20.10">
    <property type="entry name" value="Alanine racemase"/>
    <property type="match status" value="1"/>
</dbReference>
<dbReference type="Gene3D" id="2.40.37.10">
    <property type="entry name" value="Lyase, Ornithine Decarboxylase, Chain A, domain 1"/>
    <property type="match status" value="1"/>
</dbReference>
<dbReference type="InterPro" id="IPR009006">
    <property type="entry name" value="Ala_racemase/Decarboxylase_C"/>
</dbReference>
<dbReference type="InterPro" id="IPR022643">
    <property type="entry name" value="De-COase2_C"/>
</dbReference>
<dbReference type="InterPro" id="IPR022657">
    <property type="entry name" value="De-COase2_CS"/>
</dbReference>
<dbReference type="InterPro" id="IPR022644">
    <property type="entry name" value="De-COase2_N"/>
</dbReference>
<dbReference type="InterPro" id="IPR022653">
    <property type="entry name" value="De-COase2_pyr-phos_BS"/>
</dbReference>
<dbReference type="InterPro" id="IPR000183">
    <property type="entry name" value="Orn/DAP/Arg_de-COase"/>
</dbReference>
<dbReference type="InterPro" id="IPR002433">
    <property type="entry name" value="Orn_de-COase"/>
</dbReference>
<dbReference type="InterPro" id="IPR029066">
    <property type="entry name" value="PLP-binding_barrel"/>
</dbReference>
<dbReference type="PANTHER" id="PTHR11482">
    <property type="entry name" value="ARGININE/DIAMINOPIMELATE/ORNITHINE DECARBOXYLASE"/>
    <property type="match status" value="1"/>
</dbReference>
<dbReference type="PANTHER" id="PTHR11482:SF6">
    <property type="entry name" value="ORNITHINE DECARBOXYLASE 1-RELATED"/>
    <property type="match status" value="1"/>
</dbReference>
<dbReference type="Pfam" id="PF02784">
    <property type="entry name" value="Orn_Arg_deC_N"/>
    <property type="match status" value="1"/>
</dbReference>
<dbReference type="Pfam" id="PF00278">
    <property type="entry name" value="Orn_DAP_Arg_deC"/>
    <property type="match status" value="1"/>
</dbReference>
<dbReference type="PRINTS" id="PR01179">
    <property type="entry name" value="ODADCRBXLASE"/>
</dbReference>
<dbReference type="PRINTS" id="PR01182">
    <property type="entry name" value="ORNDCRBXLASE"/>
</dbReference>
<dbReference type="SUPFAM" id="SSF50621">
    <property type="entry name" value="Alanine racemase C-terminal domain-like"/>
    <property type="match status" value="1"/>
</dbReference>
<dbReference type="SUPFAM" id="SSF51419">
    <property type="entry name" value="PLP-binding barrel"/>
    <property type="match status" value="1"/>
</dbReference>
<dbReference type="PROSITE" id="PS00878">
    <property type="entry name" value="ODR_DC_2_1"/>
    <property type="match status" value="1"/>
</dbReference>
<dbReference type="PROSITE" id="PS00879">
    <property type="entry name" value="ODR_DC_2_2"/>
    <property type="match status" value="1"/>
</dbReference>
<proteinExistence type="evidence at transcript level"/>
<evidence type="ECO:0000250" key="1">
    <source>
        <dbReference type="UniProtKB" id="P00860"/>
    </source>
</evidence>
<evidence type="ECO:0000250" key="2">
    <source>
        <dbReference type="UniProtKB" id="P07805"/>
    </source>
</evidence>
<evidence type="ECO:0000250" key="3">
    <source>
        <dbReference type="UniProtKB" id="P11926"/>
    </source>
</evidence>
<evidence type="ECO:0000269" key="4">
    <source>
    </source>
</evidence>
<evidence type="ECO:0000269" key="5">
    <source ref="2"/>
</evidence>
<evidence type="ECO:0000305" key="6"/>
<protein>
    <recommendedName>
        <fullName>Ornithine decarboxylase</fullName>
        <shortName>ODC</shortName>
        <ecNumber>4.1.1.17</ecNumber>
    </recommendedName>
    <alternativeName>
        <fullName>CaODC1</fullName>
    </alternativeName>
    <alternativeName>
        <fullName>CapODC</fullName>
    </alternativeName>
</protein>
<accession>Q8S3N2</accession>
<accession>Q84UH2</accession>
<name>DCOR_CAPAN</name>
<sequence length="435" mass="46906">MAGQTVIVSGLNPAAILQSTIGGAPPSTAAAAAENGDTTRKVVPLSKDALQDFMVSIITQKLQGEKKPFYVLDLGEVVSLMDQWNVALPNVRPFYAVKCNPEPSFLSMLAAMGSNFVCASRAEIEYVLSLGISPERIVFANPCKPESDIIFAEKVGVNLTTYDSEDEVYKIKKHHPKCELLLRIKPMNDGNARCPMGPKYGALPEEIEPLLRIAQASRLTVSGVSFHIGSGDADSNAYLGAIAAAKQVFETAAKFGMSKMNVLDIGGGFTSGHQFTTAATAVKSALQQHFSNEPELTIIAEPGRFFAETAFTLATTIIGKRVRGDLREYWINDGLYGSMNCVLYDHATVTATPLACMSNRVNLNCSGSKMFPSTIFGPTCDALDTVLRDYHVPELQVNDWVIFPNMGAYTKAAGSNFNGFNTSAIVTHLAYAYPS</sequence>
<gene>
    <name type="primary">ODC</name>
    <name type="synonym">CUKM10</name>
</gene>
<keyword id="KW-0210">Decarboxylase</keyword>
<keyword id="KW-0456">Lyase</keyword>
<keyword id="KW-0620">Polyamine biosynthesis</keyword>
<keyword id="KW-0663">Pyridoxal phosphate</keyword>
<organism>
    <name type="scientific">Capsicum annuum</name>
    <name type="common">Capsicum pepper</name>
    <dbReference type="NCBI Taxonomy" id="4072"/>
    <lineage>
        <taxon>Eukaryota</taxon>
        <taxon>Viridiplantae</taxon>
        <taxon>Streptophyta</taxon>
        <taxon>Embryophyta</taxon>
        <taxon>Tracheophyta</taxon>
        <taxon>Spermatophyta</taxon>
        <taxon>Magnoliopsida</taxon>
        <taxon>eudicotyledons</taxon>
        <taxon>Gunneridae</taxon>
        <taxon>Pentapetalae</taxon>
        <taxon>asterids</taxon>
        <taxon>lamiids</taxon>
        <taxon>Solanales</taxon>
        <taxon>Solanaceae</taxon>
        <taxon>Solanoideae</taxon>
        <taxon>Capsiceae</taxon>
        <taxon>Capsicum</taxon>
    </lineage>
</organism>